<proteinExistence type="inferred from homology"/>
<reference key="1">
    <citation type="journal article" date="1981" name="Cell">
        <title>The 2.2 kb E1b mRNA of human Ad12 and Ad5 codes for two tumor antigens starting at different AUG triplets.</title>
        <authorList>
            <person name="Bos J.L."/>
            <person name="Polder L.J."/>
            <person name="Bernards R."/>
            <person name="Schrier P.I."/>
            <person name="van den Elsen P.J."/>
            <person name="van der Eb A.J."/>
            <person name="van Ormondt H."/>
        </authorList>
    </citation>
    <scope>NUCLEOTIDE SEQUENCE [GENOMIC DNA]</scope>
</reference>
<reference key="2">
    <citation type="journal article" date="1981" name="Nucleic Acids Res.">
        <title>Nucleotide sequence of the transforming early region E1b of adenovirus type 12 DNA: structure and gene organization, and comparison with those of adenovirus type 5 DNA.</title>
        <authorList>
            <person name="Kimura T."/>
            <person name="Sawada Y."/>
            <person name="Shinawawa M."/>
            <person name="Shimizu Y."/>
            <person name="Shiroki K."/>
            <person name="Shimojo H."/>
            <person name="Sugisaki H."/>
            <person name="Takanami M."/>
            <person name="Uemizu Y."/>
            <person name="Fujinaga K."/>
        </authorList>
    </citation>
    <scope>NUCLEOTIDE SEQUENCE [GENOMIC DNA]</scope>
</reference>
<reference key="3">
    <citation type="journal article" date="1983" name="Sapporo Igaku Zasshi">
        <title>Structure and sequence analysis of the transforming region E1B of human adenovirus type 12.</title>
        <authorList>
            <person name="Kimura T."/>
        </authorList>
    </citation>
    <scope>NUCLEOTIDE SEQUENCE [GENOMIC DNA]</scope>
</reference>
<reference key="4">
    <citation type="journal article" date="1994" name="J. Virol.">
        <title>Nucleotide sequence of human adenovirus type 12 DNA: comparative functional analysis.</title>
        <authorList>
            <person name="Sprengel J."/>
            <person name="Schmitz B."/>
            <person name="Heuss-Neitzel D."/>
            <person name="Zock C."/>
            <person name="Doerfler W."/>
        </authorList>
    </citation>
    <scope>NUCLEOTIDE SEQUENCE [LARGE SCALE GENOMIC DNA]</scope>
</reference>
<feature type="chain" id="PRO_0000221714" description="E1B protein, small T-antigen">
    <location>
        <begin position="1"/>
        <end position="163"/>
    </location>
</feature>
<evidence type="ECO:0000250" key="1"/>
<evidence type="ECO:0000305" key="2"/>
<name>E1BS_ADE12</name>
<comment type="function">
    <text evidence="1">Putative adenovirus Bcl-2 homolog that inhibits apoptosis induced by TNF or FAS pathways, as well as p53-mediated apoptosis. Without E1B 19K function, virus production is compromised because of premature death of host cell. Interacts with Bax protein in cell lysates (By similarity).</text>
</comment>
<comment type="subcellular location">
    <subcellularLocation>
        <location evidence="1">Host cell membrane</location>
    </subcellularLocation>
    <subcellularLocation>
        <location evidence="1">Host nucleus envelope</location>
    </subcellularLocation>
    <subcellularLocation>
        <location evidence="1">Host nucleus lamina</location>
    </subcellularLocation>
    <text evidence="1">Associated with the plasma and nuclear membranes, and with the insoluble nuclear lamina.</text>
</comment>
<comment type="similarity">
    <text evidence="2">Belongs to the adenoviridae E1B 19 kDa protein family.</text>
</comment>
<sequence>MELETVLQSFQSVRQLLQYTSKNTSGFWRYLFGSTLSKVVNRVKEDYREEFENILADCPGLLASLDLCYHLVFQEKVVRSLDFSSVGRTVASIAFLATILDKWSEKSHLSWDYMLDYMSMQLWRAWLKRRVCIYSLARPLTMPPLPTLQEEKEEERNPAVVEK</sequence>
<dbReference type="EMBL" id="V00004">
    <property type="protein sequence ID" value="CAA23406.1"/>
    <property type="molecule type" value="Genomic_DNA"/>
</dbReference>
<dbReference type="EMBL" id="V00004">
    <property type="protein sequence ID" value="CAA23405.1"/>
    <property type="molecule type" value="Genomic_DNA"/>
</dbReference>
<dbReference type="EMBL" id="V00004">
    <property type="protein sequence ID" value="CAA23403.1"/>
    <property type="molecule type" value="Genomic_DNA"/>
</dbReference>
<dbReference type="EMBL" id="V00004">
    <property type="protein sequence ID" value="CAA23404.1"/>
    <property type="molecule type" value="Genomic_DNA"/>
</dbReference>
<dbReference type="EMBL" id="M55003">
    <property type="protein sequence ID" value="AAA42498.1"/>
    <property type="molecule type" value="Genomic_DNA"/>
</dbReference>
<dbReference type="EMBL" id="X73487">
    <property type="protein sequence ID" value="CAA51878.1"/>
    <property type="molecule type" value="Genomic_DNA"/>
</dbReference>
<dbReference type="PIR" id="A03816">
    <property type="entry name" value="ERAD21"/>
</dbReference>
<dbReference type="RefSeq" id="NP_040911.1">
    <property type="nucleotide sequence ID" value="NC_001460.1"/>
</dbReference>
<dbReference type="DIP" id="DIP-379N"/>
<dbReference type="DNASU" id="1460854"/>
<dbReference type="GeneID" id="1460854"/>
<dbReference type="Proteomes" id="UP000004993">
    <property type="component" value="Genome"/>
</dbReference>
<dbReference type="GO" id="GO:0044203">
    <property type="term" value="C:host cell nuclear lamina"/>
    <property type="evidence" value="ECO:0007669"/>
    <property type="project" value="UniProtKB-SubCell"/>
</dbReference>
<dbReference type="GO" id="GO:0020002">
    <property type="term" value="C:host cell plasma membrane"/>
    <property type="evidence" value="ECO:0007669"/>
    <property type="project" value="UniProtKB-SubCell"/>
</dbReference>
<dbReference type="GO" id="GO:0016020">
    <property type="term" value="C:membrane"/>
    <property type="evidence" value="ECO:0007669"/>
    <property type="project" value="UniProtKB-KW"/>
</dbReference>
<dbReference type="GO" id="GO:0033668">
    <property type="term" value="P:symbiont-mediated suppression of host apoptosis"/>
    <property type="evidence" value="ECO:0007669"/>
    <property type="project" value="UniProtKB-KW"/>
</dbReference>
<dbReference type="InterPro" id="IPR002924">
    <property type="entry name" value="Adenovir_t-Ag_E1B_19kDa"/>
</dbReference>
<dbReference type="InterPro" id="IPR002475">
    <property type="entry name" value="Bcl2-like"/>
</dbReference>
<dbReference type="Pfam" id="PF01691">
    <property type="entry name" value="Adeno_E1B_19K"/>
    <property type="match status" value="1"/>
</dbReference>
<dbReference type="PROSITE" id="PS50062">
    <property type="entry name" value="BCL2_FAMILY"/>
    <property type="match status" value="1"/>
</dbReference>
<accession>P04492</accession>
<organism>
    <name type="scientific">Human adenovirus A serotype 12</name>
    <name type="common">HAdV-12</name>
    <name type="synonym">Human adenovirus 12</name>
    <dbReference type="NCBI Taxonomy" id="28282"/>
    <lineage>
        <taxon>Viruses</taxon>
        <taxon>Varidnaviria</taxon>
        <taxon>Bamfordvirae</taxon>
        <taxon>Preplasmiviricota</taxon>
        <taxon>Tectiliviricetes</taxon>
        <taxon>Rowavirales</taxon>
        <taxon>Adenoviridae</taxon>
        <taxon>Mastadenovirus</taxon>
        <taxon>Human mastadenovirus A</taxon>
    </lineage>
</organism>
<protein>
    <recommendedName>
        <fullName>E1B protein, small T-antigen</fullName>
    </recommendedName>
    <alternativeName>
        <fullName>E1B 19 kDa protein</fullName>
        <shortName>E1B-19K</shortName>
    </alternativeName>
</protein>
<keyword id="KW-0053">Apoptosis</keyword>
<keyword id="KW-0244">Early protein</keyword>
<keyword id="KW-1032">Host cell membrane</keyword>
<keyword id="KW-1043">Host membrane</keyword>
<keyword id="KW-1048">Host nucleus</keyword>
<keyword id="KW-0945">Host-virus interaction</keyword>
<keyword id="KW-1081">Inhibition of host apoptosis by viral BCL2-like protein</keyword>
<keyword id="KW-0472">Membrane</keyword>
<keyword id="KW-1119">Modulation of host cell apoptosis by virus</keyword>
<keyword id="KW-1185">Reference proteome</keyword>
<organismHost>
    <name type="scientific">Homo sapiens</name>
    <name type="common">Human</name>
    <dbReference type="NCBI Taxonomy" id="9606"/>
</organismHost>